<keyword id="KW-0963">Cytoplasm</keyword>
<keyword id="KW-0489">Methyltransferase</keyword>
<keyword id="KW-0694">RNA-binding</keyword>
<keyword id="KW-0698">rRNA processing</keyword>
<keyword id="KW-0949">S-adenosyl-L-methionine</keyword>
<keyword id="KW-0808">Transferase</keyword>
<gene>
    <name evidence="1" type="primary">rsmA</name>
    <name evidence="1" type="synonym">ksgA</name>
    <name type="ordered locus">BB4100</name>
</gene>
<feature type="chain" id="PRO_0000101491" description="Ribosomal RNA small subunit methyltransferase A">
    <location>
        <begin position="1"/>
        <end position="265"/>
    </location>
</feature>
<feature type="binding site" evidence="1">
    <location>
        <position position="13"/>
    </location>
    <ligand>
        <name>S-adenosyl-L-methionine</name>
        <dbReference type="ChEBI" id="CHEBI:59789"/>
    </ligand>
</feature>
<feature type="binding site" evidence="1">
    <location>
        <position position="15"/>
    </location>
    <ligand>
        <name>S-adenosyl-L-methionine</name>
        <dbReference type="ChEBI" id="CHEBI:59789"/>
    </ligand>
</feature>
<feature type="binding site" evidence="1">
    <location>
        <position position="40"/>
    </location>
    <ligand>
        <name>S-adenosyl-L-methionine</name>
        <dbReference type="ChEBI" id="CHEBI:59789"/>
    </ligand>
</feature>
<feature type="binding site" evidence="1">
    <location>
        <position position="61"/>
    </location>
    <ligand>
        <name>S-adenosyl-L-methionine</name>
        <dbReference type="ChEBI" id="CHEBI:59789"/>
    </ligand>
</feature>
<feature type="binding site" evidence="1">
    <location>
        <position position="85"/>
    </location>
    <ligand>
        <name>S-adenosyl-L-methionine</name>
        <dbReference type="ChEBI" id="CHEBI:59789"/>
    </ligand>
</feature>
<feature type="binding site" evidence="1">
    <location>
        <position position="103"/>
    </location>
    <ligand>
        <name>S-adenosyl-L-methionine</name>
        <dbReference type="ChEBI" id="CHEBI:59789"/>
    </ligand>
</feature>
<sequence>MSAHQARKRFGQHFLTDESVVESIVRAIGPARDDRVVEIGPGLSALTRPLLDRIDHLTAVEIDRDLAARLRRQYPAERLTVVEADALTVDFAQFGQGLRVVGNLPYNISSPLLFHLMGAAEQVRDQHFMLQREVIDRMVAEPGSGDYSRLSVMLQARYRMEKLFDVAPEAFDPPPRVVSAVVRMAPLPADRLRPASDAAFETVVARAFSQRRKMLRRVLGDWAALTPWDELGIAPTARAEEVGVAQFIGLADALLAAGAPGLARP</sequence>
<dbReference type="EC" id="2.1.1.182" evidence="1"/>
<dbReference type="EMBL" id="BX640449">
    <property type="protein sequence ID" value="CAE34463.1"/>
    <property type="molecule type" value="Genomic_DNA"/>
</dbReference>
<dbReference type="RefSeq" id="WP_003814423.1">
    <property type="nucleotide sequence ID" value="NC_002927.3"/>
</dbReference>
<dbReference type="SMR" id="Q7WG20"/>
<dbReference type="GeneID" id="56477400"/>
<dbReference type="KEGG" id="bbr:BB4100"/>
<dbReference type="eggNOG" id="COG0030">
    <property type="taxonomic scope" value="Bacteria"/>
</dbReference>
<dbReference type="HOGENOM" id="CLU_041220_0_1_4"/>
<dbReference type="Proteomes" id="UP000001027">
    <property type="component" value="Chromosome"/>
</dbReference>
<dbReference type="GO" id="GO:0005829">
    <property type="term" value="C:cytosol"/>
    <property type="evidence" value="ECO:0007669"/>
    <property type="project" value="TreeGrafter"/>
</dbReference>
<dbReference type="GO" id="GO:0052908">
    <property type="term" value="F:16S rRNA (adenine(1518)-N(6)/adenine(1519)-N(6))-dimethyltransferase activity"/>
    <property type="evidence" value="ECO:0007669"/>
    <property type="project" value="UniProtKB-EC"/>
</dbReference>
<dbReference type="GO" id="GO:0003723">
    <property type="term" value="F:RNA binding"/>
    <property type="evidence" value="ECO:0007669"/>
    <property type="project" value="UniProtKB-KW"/>
</dbReference>
<dbReference type="CDD" id="cd02440">
    <property type="entry name" value="AdoMet_MTases"/>
    <property type="match status" value="1"/>
</dbReference>
<dbReference type="FunFam" id="1.10.8.100:FF:000001">
    <property type="entry name" value="Ribosomal RNA small subunit methyltransferase A"/>
    <property type="match status" value="1"/>
</dbReference>
<dbReference type="Gene3D" id="1.10.8.100">
    <property type="entry name" value="Ribosomal RNA adenine dimethylase-like, domain 2"/>
    <property type="match status" value="1"/>
</dbReference>
<dbReference type="Gene3D" id="3.40.50.150">
    <property type="entry name" value="Vaccinia Virus protein VP39"/>
    <property type="match status" value="1"/>
</dbReference>
<dbReference type="HAMAP" id="MF_00607">
    <property type="entry name" value="16SrRNA_methyltr_A"/>
    <property type="match status" value="1"/>
</dbReference>
<dbReference type="InterPro" id="IPR001737">
    <property type="entry name" value="KsgA/Erm"/>
</dbReference>
<dbReference type="InterPro" id="IPR023165">
    <property type="entry name" value="rRNA_Ade_diMease-like_C"/>
</dbReference>
<dbReference type="InterPro" id="IPR020596">
    <property type="entry name" value="rRNA_Ade_Mease_Trfase_CS"/>
</dbReference>
<dbReference type="InterPro" id="IPR020598">
    <property type="entry name" value="rRNA_Ade_methylase_Trfase_N"/>
</dbReference>
<dbReference type="InterPro" id="IPR011530">
    <property type="entry name" value="rRNA_adenine_dimethylase"/>
</dbReference>
<dbReference type="InterPro" id="IPR029063">
    <property type="entry name" value="SAM-dependent_MTases_sf"/>
</dbReference>
<dbReference type="NCBIfam" id="TIGR00755">
    <property type="entry name" value="ksgA"/>
    <property type="match status" value="1"/>
</dbReference>
<dbReference type="PANTHER" id="PTHR11727">
    <property type="entry name" value="DIMETHYLADENOSINE TRANSFERASE"/>
    <property type="match status" value="1"/>
</dbReference>
<dbReference type="PANTHER" id="PTHR11727:SF7">
    <property type="entry name" value="DIMETHYLADENOSINE TRANSFERASE-RELATED"/>
    <property type="match status" value="1"/>
</dbReference>
<dbReference type="Pfam" id="PF00398">
    <property type="entry name" value="RrnaAD"/>
    <property type="match status" value="1"/>
</dbReference>
<dbReference type="SMART" id="SM00650">
    <property type="entry name" value="rADc"/>
    <property type="match status" value="1"/>
</dbReference>
<dbReference type="SUPFAM" id="SSF53335">
    <property type="entry name" value="S-adenosyl-L-methionine-dependent methyltransferases"/>
    <property type="match status" value="1"/>
</dbReference>
<dbReference type="PROSITE" id="PS01131">
    <property type="entry name" value="RRNA_A_DIMETH"/>
    <property type="match status" value="1"/>
</dbReference>
<dbReference type="PROSITE" id="PS51689">
    <property type="entry name" value="SAM_RNA_A_N6_MT"/>
    <property type="match status" value="1"/>
</dbReference>
<evidence type="ECO:0000255" key="1">
    <source>
        <dbReference type="HAMAP-Rule" id="MF_00607"/>
    </source>
</evidence>
<accession>Q7WG20</accession>
<protein>
    <recommendedName>
        <fullName evidence="1">Ribosomal RNA small subunit methyltransferase A</fullName>
        <ecNumber evidence="1">2.1.1.182</ecNumber>
    </recommendedName>
    <alternativeName>
        <fullName evidence="1">16S rRNA (adenine(1518)-N(6)/adenine(1519)-N(6))-dimethyltransferase</fullName>
    </alternativeName>
    <alternativeName>
        <fullName evidence="1">16S rRNA dimethyladenosine transferase</fullName>
    </alternativeName>
    <alternativeName>
        <fullName evidence="1">16S rRNA dimethylase</fullName>
    </alternativeName>
    <alternativeName>
        <fullName evidence="1">S-adenosylmethionine-6-N', N'-adenosyl(rRNA) dimethyltransferase</fullName>
    </alternativeName>
</protein>
<name>RSMA_BORBR</name>
<comment type="function">
    <text evidence="1">Specifically dimethylates two adjacent adenosines (A1518 and A1519) in the loop of a conserved hairpin near the 3'-end of 16S rRNA in the 30S particle. May play a critical role in biogenesis of 30S subunits.</text>
</comment>
<comment type="catalytic activity">
    <reaction evidence="1">
        <text>adenosine(1518)/adenosine(1519) in 16S rRNA + 4 S-adenosyl-L-methionine = N(6)-dimethyladenosine(1518)/N(6)-dimethyladenosine(1519) in 16S rRNA + 4 S-adenosyl-L-homocysteine + 4 H(+)</text>
        <dbReference type="Rhea" id="RHEA:19609"/>
        <dbReference type="Rhea" id="RHEA-COMP:10232"/>
        <dbReference type="Rhea" id="RHEA-COMP:10233"/>
        <dbReference type="ChEBI" id="CHEBI:15378"/>
        <dbReference type="ChEBI" id="CHEBI:57856"/>
        <dbReference type="ChEBI" id="CHEBI:59789"/>
        <dbReference type="ChEBI" id="CHEBI:74411"/>
        <dbReference type="ChEBI" id="CHEBI:74493"/>
        <dbReference type="EC" id="2.1.1.182"/>
    </reaction>
</comment>
<comment type="subcellular location">
    <subcellularLocation>
        <location evidence="1">Cytoplasm</location>
    </subcellularLocation>
</comment>
<comment type="similarity">
    <text evidence="1">Belongs to the class I-like SAM-binding methyltransferase superfamily. rRNA adenine N(6)-methyltransferase family. RsmA subfamily.</text>
</comment>
<organism>
    <name type="scientific">Bordetella bronchiseptica (strain ATCC BAA-588 / NCTC 13252 / RB50)</name>
    <name type="common">Alcaligenes bronchisepticus</name>
    <dbReference type="NCBI Taxonomy" id="257310"/>
    <lineage>
        <taxon>Bacteria</taxon>
        <taxon>Pseudomonadati</taxon>
        <taxon>Pseudomonadota</taxon>
        <taxon>Betaproteobacteria</taxon>
        <taxon>Burkholderiales</taxon>
        <taxon>Alcaligenaceae</taxon>
        <taxon>Bordetella</taxon>
    </lineage>
</organism>
<proteinExistence type="inferred from homology"/>
<reference key="1">
    <citation type="journal article" date="2003" name="Nat. Genet.">
        <title>Comparative analysis of the genome sequences of Bordetella pertussis, Bordetella parapertussis and Bordetella bronchiseptica.</title>
        <authorList>
            <person name="Parkhill J."/>
            <person name="Sebaihia M."/>
            <person name="Preston A."/>
            <person name="Murphy L.D."/>
            <person name="Thomson N.R."/>
            <person name="Harris D.E."/>
            <person name="Holden M.T.G."/>
            <person name="Churcher C.M."/>
            <person name="Bentley S.D."/>
            <person name="Mungall K.L."/>
            <person name="Cerdeno-Tarraga A.-M."/>
            <person name="Temple L."/>
            <person name="James K.D."/>
            <person name="Harris B."/>
            <person name="Quail M.A."/>
            <person name="Achtman M."/>
            <person name="Atkin R."/>
            <person name="Baker S."/>
            <person name="Basham D."/>
            <person name="Bason N."/>
            <person name="Cherevach I."/>
            <person name="Chillingworth T."/>
            <person name="Collins M."/>
            <person name="Cronin A."/>
            <person name="Davis P."/>
            <person name="Doggett J."/>
            <person name="Feltwell T."/>
            <person name="Goble A."/>
            <person name="Hamlin N."/>
            <person name="Hauser H."/>
            <person name="Holroyd S."/>
            <person name="Jagels K."/>
            <person name="Leather S."/>
            <person name="Moule S."/>
            <person name="Norberczak H."/>
            <person name="O'Neil S."/>
            <person name="Ormond D."/>
            <person name="Price C."/>
            <person name="Rabbinowitsch E."/>
            <person name="Rutter S."/>
            <person name="Sanders M."/>
            <person name="Saunders D."/>
            <person name="Seeger K."/>
            <person name="Sharp S."/>
            <person name="Simmonds M."/>
            <person name="Skelton J."/>
            <person name="Squares R."/>
            <person name="Squares S."/>
            <person name="Stevens K."/>
            <person name="Unwin L."/>
            <person name="Whitehead S."/>
            <person name="Barrell B.G."/>
            <person name="Maskell D.J."/>
        </authorList>
    </citation>
    <scope>NUCLEOTIDE SEQUENCE [LARGE SCALE GENOMIC DNA]</scope>
    <source>
        <strain>ATCC BAA-588 / NCTC 13252 / RB50</strain>
    </source>
</reference>